<comment type="subcellular location">
    <subcellularLocation>
        <location evidence="1">Cytoplasm</location>
        <location evidence="1">Nucleoid</location>
    </subcellularLocation>
</comment>
<comment type="similarity">
    <text evidence="1">Belongs to the YejK family.</text>
</comment>
<accession>Q8D867</accession>
<protein>
    <recommendedName>
        <fullName evidence="1">Nucleoid-associated protein VV1_3120</fullName>
    </recommendedName>
</protein>
<sequence>MSLHLSNVILHQLSKNDQDELMVNYRSESLVNDSSTENLVAELHRVFHSKAGKGFGCFQSDSEFQIWLNELQRGELNFYDFSQKCAVRLKEELAKYPFADEGILVFAEYQSLATDYLFVGILPLNQSLKVTEGLDISATDYLDINKMDIAARIDLSVYEADKESNRYLSYIKGRVGRKVADFFLDFLQAEVGLDSKQQNQVLMQALDDFCTDAKLEKQEVNEYKKQVYEYCNGQIKAGEEVEIRELSGELPPSPSGASFLEFTQEQGYGLEESFPADRGLVRKLTKYVGAGGGLNVSFDSLLLGERIFYDPETDTLTIKGTPPNLRDQLTRNR</sequence>
<dbReference type="EMBL" id="AE016795">
    <property type="protein sequence ID" value="AAO11441.1"/>
    <property type="molecule type" value="Genomic_DNA"/>
</dbReference>
<dbReference type="RefSeq" id="WP_011080920.1">
    <property type="nucleotide sequence ID" value="NC_004459.3"/>
</dbReference>
<dbReference type="SMR" id="Q8D867"/>
<dbReference type="KEGG" id="vvu:VV1_3120"/>
<dbReference type="PATRIC" id="fig|196600.6.peg.1160"/>
<dbReference type="HOGENOM" id="CLU_063050_0_1_6"/>
<dbReference type="Proteomes" id="UP000002275">
    <property type="component" value="Chromosome 1"/>
</dbReference>
<dbReference type="GO" id="GO:0043590">
    <property type="term" value="C:bacterial nucleoid"/>
    <property type="evidence" value="ECO:0007669"/>
    <property type="project" value="TreeGrafter"/>
</dbReference>
<dbReference type="GO" id="GO:0005737">
    <property type="term" value="C:cytoplasm"/>
    <property type="evidence" value="ECO:0007669"/>
    <property type="project" value="UniProtKB-UniRule"/>
</dbReference>
<dbReference type="GO" id="GO:0003690">
    <property type="term" value="F:double-stranded DNA binding"/>
    <property type="evidence" value="ECO:0007669"/>
    <property type="project" value="TreeGrafter"/>
</dbReference>
<dbReference type="GO" id="GO:0003727">
    <property type="term" value="F:single-stranded RNA binding"/>
    <property type="evidence" value="ECO:0007669"/>
    <property type="project" value="TreeGrafter"/>
</dbReference>
<dbReference type="HAMAP" id="MF_00730">
    <property type="entry name" value="NdpA"/>
    <property type="match status" value="1"/>
</dbReference>
<dbReference type="InterPro" id="IPR007358">
    <property type="entry name" value="Nucleoid_associated_NdpA"/>
</dbReference>
<dbReference type="NCBIfam" id="NF001557">
    <property type="entry name" value="PRK00378.1"/>
    <property type="match status" value="1"/>
</dbReference>
<dbReference type="PANTHER" id="PTHR38772">
    <property type="match status" value="1"/>
</dbReference>
<dbReference type="PANTHER" id="PTHR38772:SF1">
    <property type="entry name" value="NUCLEOID-ASSOCIATED PROTEIN YEJK"/>
    <property type="match status" value="1"/>
</dbReference>
<dbReference type="Pfam" id="PF04245">
    <property type="entry name" value="NA37"/>
    <property type="match status" value="1"/>
</dbReference>
<keyword id="KW-0963">Cytoplasm</keyword>
<gene>
    <name type="ordered locus">VV1_3120</name>
</gene>
<proteinExistence type="inferred from homology"/>
<evidence type="ECO:0000255" key="1">
    <source>
        <dbReference type="HAMAP-Rule" id="MF_00730"/>
    </source>
</evidence>
<feature type="chain" id="PRO_0000210923" description="Nucleoid-associated protein VV1_3120">
    <location>
        <begin position="1"/>
        <end position="333"/>
    </location>
</feature>
<reference key="1">
    <citation type="submission" date="2002-12" db="EMBL/GenBank/DDBJ databases">
        <title>Complete genome sequence of Vibrio vulnificus CMCP6.</title>
        <authorList>
            <person name="Rhee J.H."/>
            <person name="Kim S.Y."/>
            <person name="Chung S.S."/>
            <person name="Kim J.J."/>
            <person name="Moon Y.H."/>
            <person name="Jeong H."/>
            <person name="Choy H.E."/>
        </authorList>
    </citation>
    <scope>NUCLEOTIDE SEQUENCE [LARGE SCALE GENOMIC DNA]</scope>
    <source>
        <strain>CMCP6</strain>
    </source>
</reference>
<name>NDPA_VIBVU</name>
<organism>
    <name type="scientific">Vibrio vulnificus (strain CMCP6)</name>
    <dbReference type="NCBI Taxonomy" id="216895"/>
    <lineage>
        <taxon>Bacteria</taxon>
        <taxon>Pseudomonadati</taxon>
        <taxon>Pseudomonadota</taxon>
        <taxon>Gammaproteobacteria</taxon>
        <taxon>Vibrionales</taxon>
        <taxon>Vibrionaceae</taxon>
        <taxon>Vibrio</taxon>
    </lineage>
</organism>